<organism>
    <name type="scientific">Shewanella oneidensis (strain ATCC 700550 / JCM 31522 / CIP 106686 / LMG 19005 / NCIMB 14063 / MR-1)</name>
    <dbReference type="NCBI Taxonomy" id="211586"/>
    <lineage>
        <taxon>Bacteria</taxon>
        <taxon>Pseudomonadati</taxon>
        <taxon>Pseudomonadota</taxon>
        <taxon>Gammaproteobacteria</taxon>
        <taxon>Alteromonadales</taxon>
        <taxon>Shewanellaceae</taxon>
        <taxon>Shewanella</taxon>
    </lineage>
</organism>
<sequence>MKSHIQSLLEQTIESFKQQGILPADFEARIQVDRTKDKSHGDLATNVAMMLTKAAGKNPRELAQLIIDNLPASAYVAKVEIAGPGFINFFIDDSALANQLQAAIGDEHLGIKLPAPQTVVVDYSSPNLAKEMHVGHLRSTIIGDSVVRTLEFLGHKVIRQNHVGDWGTQFGMLLAYMEELRAANGEQAQLELSDLETFYRAAKLRFDESAEFATRARQLVVALQSGDEYCNKLWREFNDISLSHCHEVYERLGVSLTRADVHGESAYNADLEQVVNDLAAKGLLTESNGAKVVFQEEFRTKEGEPLPVIIQKADGGYLYATTDLAAMRYRSNVLKADRVLYFVDLRQALHFQQVFSLAKLAKFVREDMSLEHLGFGTMNGEDGRPFKTRTGGVVKLVDLLDEANTRALELVRSKNPDMDEATLAEIARVVGISAVKYADLSKNRTSDYIFSFEQMLSFEGNTAPYLLYAYTRVAGIFKRATDVDLSQAKIVLEHEKEKDLGNKLAQFGEILSRVVDKGQPHVLCGYLYELAGAFSSFYEACPVLAADNDEQKHSRLLLSQLTASTLQKGLNLLGIETLERM</sequence>
<comment type="catalytic activity">
    <reaction evidence="1">
        <text>tRNA(Arg) + L-arginine + ATP = L-arginyl-tRNA(Arg) + AMP + diphosphate</text>
        <dbReference type="Rhea" id="RHEA:20301"/>
        <dbReference type="Rhea" id="RHEA-COMP:9658"/>
        <dbReference type="Rhea" id="RHEA-COMP:9673"/>
        <dbReference type="ChEBI" id="CHEBI:30616"/>
        <dbReference type="ChEBI" id="CHEBI:32682"/>
        <dbReference type="ChEBI" id="CHEBI:33019"/>
        <dbReference type="ChEBI" id="CHEBI:78442"/>
        <dbReference type="ChEBI" id="CHEBI:78513"/>
        <dbReference type="ChEBI" id="CHEBI:456215"/>
        <dbReference type="EC" id="6.1.1.19"/>
    </reaction>
</comment>
<comment type="subunit">
    <text evidence="1">Monomer.</text>
</comment>
<comment type="subcellular location">
    <subcellularLocation>
        <location evidence="1">Cytoplasm</location>
    </subcellularLocation>
</comment>
<comment type="similarity">
    <text evidence="1">Belongs to the class-I aminoacyl-tRNA synthetase family.</text>
</comment>
<name>SYR_SHEON</name>
<dbReference type="EC" id="6.1.1.19" evidence="1"/>
<dbReference type="EMBL" id="AE014299">
    <property type="protein sequence ID" value="AAN57096.1"/>
    <property type="molecule type" value="Genomic_DNA"/>
</dbReference>
<dbReference type="RefSeq" id="NP_719652.1">
    <property type="nucleotide sequence ID" value="NC_004347.2"/>
</dbReference>
<dbReference type="RefSeq" id="WP_011073824.1">
    <property type="nucleotide sequence ID" value="NC_004347.2"/>
</dbReference>
<dbReference type="SMR" id="Q8E9Y7"/>
<dbReference type="STRING" id="211586.SO_4123"/>
<dbReference type="PaxDb" id="211586-SO_4123"/>
<dbReference type="KEGG" id="son:SO_4123"/>
<dbReference type="PATRIC" id="fig|211586.12.peg.3988"/>
<dbReference type="eggNOG" id="COG0018">
    <property type="taxonomic scope" value="Bacteria"/>
</dbReference>
<dbReference type="HOGENOM" id="CLU_006406_5_1_6"/>
<dbReference type="OrthoDB" id="9803211at2"/>
<dbReference type="PhylomeDB" id="Q8E9Y7"/>
<dbReference type="BioCyc" id="SONE211586:G1GMP-3809-MONOMER"/>
<dbReference type="Proteomes" id="UP000008186">
    <property type="component" value="Chromosome"/>
</dbReference>
<dbReference type="GO" id="GO:0005737">
    <property type="term" value="C:cytoplasm"/>
    <property type="evidence" value="ECO:0007669"/>
    <property type="project" value="UniProtKB-SubCell"/>
</dbReference>
<dbReference type="GO" id="GO:0004814">
    <property type="term" value="F:arginine-tRNA ligase activity"/>
    <property type="evidence" value="ECO:0000318"/>
    <property type="project" value="GO_Central"/>
</dbReference>
<dbReference type="GO" id="GO:0005524">
    <property type="term" value="F:ATP binding"/>
    <property type="evidence" value="ECO:0007669"/>
    <property type="project" value="UniProtKB-UniRule"/>
</dbReference>
<dbReference type="GO" id="GO:0006420">
    <property type="term" value="P:arginyl-tRNA aminoacylation"/>
    <property type="evidence" value="ECO:0000318"/>
    <property type="project" value="GO_Central"/>
</dbReference>
<dbReference type="CDD" id="cd07956">
    <property type="entry name" value="Anticodon_Ia_Arg"/>
    <property type="match status" value="1"/>
</dbReference>
<dbReference type="CDD" id="cd00671">
    <property type="entry name" value="ArgRS_core"/>
    <property type="match status" value="1"/>
</dbReference>
<dbReference type="FunFam" id="1.10.730.10:FF:000001">
    <property type="entry name" value="Arginine--tRNA ligase"/>
    <property type="match status" value="1"/>
</dbReference>
<dbReference type="FunFam" id="3.30.1360.70:FF:000003">
    <property type="entry name" value="Arginine--tRNA ligase"/>
    <property type="match status" value="1"/>
</dbReference>
<dbReference type="FunFam" id="3.40.50.620:FF:000030">
    <property type="entry name" value="Arginine--tRNA ligase"/>
    <property type="match status" value="1"/>
</dbReference>
<dbReference type="Gene3D" id="3.30.1360.70">
    <property type="entry name" value="Arginyl tRNA synthetase N-terminal domain"/>
    <property type="match status" value="1"/>
</dbReference>
<dbReference type="Gene3D" id="3.40.50.620">
    <property type="entry name" value="HUPs"/>
    <property type="match status" value="1"/>
</dbReference>
<dbReference type="Gene3D" id="1.10.730.10">
    <property type="entry name" value="Isoleucyl-tRNA Synthetase, Domain 1"/>
    <property type="match status" value="1"/>
</dbReference>
<dbReference type="HAMAP" id="MF_00123">
    <property type="entry name" value="Arg_tRNA_synth"/>
    <property type="match status" value="1"/>
</dbReference>
<dbReference type="InterPro" id="IPR001412">
    <property type="entry name" value="aa-tRNA-synth_I_CS"/>
</dbReference>
<dbReference type="InterPro" id="IPR001278">
    <property type="entry name" value="Arg-tRNA-ligase"/>
</dbReference>
<dbReference type="InterPro" id="IPR005148">
    <property type="entry name" value="Arg-tRNA-synth_N"/>
</dbReference>
<dbReference type="InterPro" id="IPR036695">
    <property type="entry name" value="Arg-tRNA-synth_N_sf"/>
</dbReference>
<dbReference type="InterPro" id="IPR035684">
    <property type="entry name" value="ArgRS_core"/>
</dbReference>
<dbReference type="InterPro" id="IPR008909">
    <property type="entry name" value="DALR_anticod-bd"/>
</dbReference>
<dbReference type="InterPro" id="IPR014729">
    <property type="entry name" value="Rossmann-like_a/b/a_fold"/>
</dbReference>
<dbReference type="InterPro" id="IPR009080">
    <property type="entry name" value="tRNAsynth_Ia_anticodon-bd"/>
</dbReference>
<dbReference type="NCBIfam" id="TIGR00456">
    <property type="entry name" value="argS"/>
    <property type="match status" value="1"/>
</dbReference>
<dbReference type="PANTHER" id="PTHR11956:SF5">
    <property type="entry name" value="ARGININE--TRNA LIGASE, CYTOPLASMIC"/>
    <property type="match status" value="1"/>
</dbReference>
<dbReference type="PANTHER" id="PTHR11956">
    <property type="entry name" value="ARGINYL-TRNA SYNTHETASE"/>
    <property type="match status" value="1"/>
</dbReference>
<dbReference type="Pfam" id="PF03485">
    <property type="entry name" value="Arg_tRNA_synt_N"/>
    <property type="match status" value="1"/>
</dbReference>
<dbReference type="Pfam" id="PF05746">
    <property type="entry name" value="DALR_1"/>
    <property type="match status" value="1"/>
</dbReference>
<dbReference type="Pfam" id="PF00750">
    <property type="entry name" value="tRNA-synt_1d"/>
    <property type="match status" value="1"/>
</dbReference>
<dbReference type="PRINTS" id="PR01038">
    <property type="entry name" value="TRNASYNTHARG"/>
</dbReference>
<dbReference type="SMART" id="SM01016">
    <property type="entry name" value="Arg_tRNA_synt_N"/>
    <property type="match status" value="1"/>
</dbReference>
<dbReference type="SMART" id="SM00836">
    <property type="entry name" value="DALR_1"/>
    <property type="match status" value="1"/>
</dbReference>
<dbReference type="SUPFAM" id="SSF47323">
    <property type="entry name" value="Anticodon-binding domain of a subclass of class I aminoacyl-tRNA synthetases"/>
    <property type="match status" value="1"/>
</dbReference>
<dbReference type="SUPFAM" id="SSF55190">
    <property type="entry name" value="Arginyl-tRNA synthetase (ArgRS), N-terminal 'additional' domain"/>
    <property type="match status" value="1"/>
</dbReference>
<dbReference type="SUPFAM" id="SSF52374">
    <property type="entry name" value="Nucleotidylyl transferase"/>
    <property type="match status" value="1"/>
</dbReference>
<dbReference type="PROSITE" id="PS00178">
    <property type="entry name" value="AA_TRNA_LIGASE_I"/>
    <property type="match status" value="1"/>
</dbReference>
<gene>
    <name evidence="1" type="primary">argS</name>
    <name type="ordered locus">SO_4123</name>
</gene>
<evidence type="ECO:0000255" key="1">
    <source>
        <dbReference type="HAMAP-Rule" id="MF_00123"/>
    </source>
</evidence>
<proteinExistence type="inferred from homology"/>
<protein>
    <recommendedName>
        <fullName evidence="1">Arginine--tRNA ligase</fullName>
        <ecNumber evidence="1">6.1.1.19</ecNumber>
    </recommendedName>
    <alternativeName>
        <fullName evidence="1">Arginyl-tRNA synthetase</fullName>
        <shortName evidence="1">ArgRS</shortName>
    </alternativeName>
</protein>
<feature type="chain" id="PRO_0000151603" description="Arginine--tRNA ligase">
    <location>
        <begin position="1"/>
        <end position="581"/>
    </location>
</feature>
<feature type="short sequence motif" description="'HIGH' region">
    <location>
        <begin position="126"/>
        <end position="136"/>
    </location>
</feature>
<reference key="1">
    <citation type="journal article" date="2002" name="Nat. Biotechnol.">
        <title>Genome sequence of the dissimilatory metal ion-reducing bacterium Shewanella oneidensis.</title>
        <authorList>
            <person name="Heidelberg J.F."/>
            <person name="Paulsen I.T."/>
            <person name="Nelson K.E."/>
            <person name="Gaidos E.J."/>
            <person name="Nelson W.C."/>
            <person name="Read T.D."/>
            <person name="Eisen J.A."/>
            <person name="Seshadri R."/>
            <person name="Ward N.L."/>
            <person name="Methe B.A."/>
            <person name="Clayton R.A."/>
            <person name="Meyer T."/>
            <person name="Tsapin A."/>
            <person name="Scott J."/>
            <person name="Beanan M.J."/>
            <person name="Brinkac L.M."/>
            <person name="Daugherty S.C."/>
            <person name="DeBoy R.T."/>
            <person name="Dodson R.J."/>
            <person name="Durkin A.S."/>
            <person name="Haft D.H."/>
            <person name="Kolonay J.F."/>
            <person name="Madupu R."/>
            <person name="Peterson J.D."/>
            <person name="Umayam L.A."/>
            <person name="White O."/>
            <person name="Wolf A.M."/>
            <person name="Vamathevan J.J."/>
            <person name="Weidman J.F."/>
            <person name="Impraim M."/>
            <person name="Lee K."/>
            <person name="Berry K.J."/>
            <person name="Lee C."/>
            <person name="Mueller J."/>
            <person name="Khouri H.M."/>
            <person name="Gill J."/>
            <person name="Utterback T.R."/>
            <person name="McDonald L.A."/>
            <person name="Feldblyum T.V."/>
            <person name="Smith H.O."/>
            <person name="Venter J.C."/>
            <person name="Nealson K.H."/>
            <person name="Fraser C.M."/>
        </authorList>
    </citation>
    <scope>NUCLEOTIDE SEQUENCE [LARGE SCALE GENOMIC DNA]</scope>
    <source>
        <strain>ATCC 700550 / JCM 31522 / CIP 106686 / LMG 19005 / NCIMB 14063 / MR-1</strain>
    </source>
</reference>
<accession>Q8E9Y7</accession>
<keyword id="KW-0030">Aminoacyl-tRNA synthetase</keyword>
<keyword id="KW-0067">ATP-binding</keyword>
<keyword id="KW-0963">Cytoplasm</keyword>
<keyword id="KW-0436">Ligase</keyword>
<keyword id="KW-0547">Nucleotide-binding</keyword>
<keyword id="KW-0648">Protein biosynthesis</keyword>
<keyword id="KW-1185">Reference proteome</keyword>